<name>Y1006_LACLS</name>
<feature type="chain" id="PRO_1000013008" description="UPF0145 protein LACR_1006">
    <location>
        <begin position="1"/>
        <end position="108"/>
    </location>
</feature>
<proteinExistence type="inferred from homology"/>
<sequence>MDDMLIVTTNEVAGYRIVEVYGEVFGLTTRSRNLFSSAGQQMKTVVGGEINGYTKLQHDTRETSIGRMKEEAKAKGANAIVAMRFDSSTFQNIDSVAAYGTAVKIEKI</sequence>
<organism>
    <name type="scientific">Lactococcus lactis subsp. cremoris (strain SK11)</name>
    <dbReference type="NCBI Taxonomy" id="272622"/>
    <lineage>
        <taxon>Bacteria</taxon>
        <taxon>Bacillati</taxon>
        <taxon>Bacillota</taxon>
        <taxon>Bacilli</taxon>
        <taxon>Lactobacillales</taxon>
        <taxon>Streptococcaceae</taxon>
        <taxon>Lactococcus</taxon>
        <taxon>Lactococcus cremoris subsp. cremoris</taxon>
    </lineage>
</organism>
<comment type="similarity">
    <text evidence="1">Belongs to the UPF0145 family.</text>
</comment>
<accession>Q02ZS8</accession>
<reference key="1">
    <citation type="journal article" date="2006" name="Proc. Natl. Acad. Sci. U.S.A.">
        <title>Comparative genomics of the lactic acid bacteria.</title>
        <authorList>
            <person name="Makarova K.S."/>
            <person name="Slesarev A."/>
            <person name="Wolf Y.I."/>
            <person name="Sorokin A."/>
            <person name="Mirkin B."/>
            <person name="Koonin E.V."/>
            <person name="Pavlov A."/>
            <person name="Pavlova N."/>
            <person name="Karamychev V."/>
            <person name="Polouchine N."/>
            <person name="Shakhova V."/>
            <person name="Grigoriev I."/>
            <person name="Lou Y."/>
            <person name="Rohksar D."/>
            <person name="Lucas S."/>
            <person name="Huang K."/>
            <person name="Goodstein D.M."/>
            <person name="Hawkins T."/>
            <person name="Plengvidhya V."/>
            <person name="Welker D."/>
            <person name="Hughes J."/>
            <person name="Goh Y."/>
            <person name="Benson A."/>
            <person name="Baldwin K."/>
            <person name="Lee J.-H."/>
            <person name="Diaz-Muniz I."/>
            <person name="Dosti B."/>
            <person name="Smeianov V."/>
            <person name="Wechter W."/>
            <person name="Barabote R."/>
            <person name="Lorca G."/>
            <person name="Altermann E."/>
            <person name="Barrangou R."/>
            <person name="Ganesan B."/>
            <person name="Xie Y."/>
            <person name="Rawsthorne H."/>
            <person name="Tamir D."/>
            <person name="Parker C."/>
            <person name="Breidt F."/>
            <person name="Broadbent J.R."/>
            <person name="Hutkins R."/>
            <person name="O'Sullivan D."/>
            <person name="Steele J."/>
            <person name="Unlu G."/>
            <person name="Saier M.H. Jr."/>
            <person name="Klaenhammer T."/>
            <person name="Richardson P."/>
            <person name="Kozyavkin S."/>
            <person name="Weimer B.C."/>
            <person name="Mills D.A."/>
        </authorList>
    </citation>
    <scope>NUCLEOTIDE SEQUENCE [LARGE SCALE GENOMIC DNA]</scope>
    <source>
        <strain>SK11</strain>
    </source>
</reference>
<gene>
    <name type="ordered locus">LACR_1006</name>
</gene>
<evidence type="ECO:0000255" key="1">
    <source>
        <dbReference type="HAMAP-Rule" id="MF_00338"/>
    </source>
</evidence>
<protein>
    <recommendedName>
        <fullName evidence="1">UPF0145 protein LACR_1006</fullName>
    </recommendedName>
</protein>
<dbReference type="EMBL" id="CP000425">
    <property type="protein sequence ID" value="ABJ72544.1"/>
    <property type="molecule type" value="Genomic_DNA"/>
</dbReference>
<dbReference type="RefSeq" id="WP_011675885.1">
    <property type="nucleotide sequence ID" value="NC_008527.1"/>
</dbReference>
<dbReference type="SMR" id="Q02ZS8"/>
<dbReference type="KEGG" id="llc:LACR_1006"/>
<dbReference type="HOGENOM" id="CLU_117144_1_2_9"/>
<dbReference type="Proteomes" id="UP000000240">
    <property type="component" value="Chromosome"/>
</dbReference>
<dbReference type="Gene3D" id="3.30.110.70">
    <property type="entry name" value="Hypothetical protein apc22750. Chain B"/>
    <property type="match status" value="1"/>
</dbReference>
<dbReference type="HAMAP" id="MF_00338">
    <property type="entry name" value="UPF0145"/>
    <property type="match status" value="1"/>
</dbReference>
<dbReference type="InterPro" id="IPR035439">
    <property type="entry name" value="UPF0145_dom_sf"/>
</dbReference>
<dbReference type="InterPro" id="IPR002765">
    <property type="entry name" value="UPF0145_YbjQ-like"/>
</dbReference>
<dbReference type="PANTHER" id="PTHR34068:SF2">
    <property type="entry name" value="UPF0145 PROTEIN SCO3412"/>
    <property type="match status" value="1"/>
</dbReference>
<dbReference type="PANTHER" id="PTHR34068">
    <property type="entry name" value="UPF0145 PROTEIN YBJQ"/>
    <property type="match status" value="1"/>
</dbReference>
<dbReference type="Pfam" id="PF01906">
    <property type="entry name" value="YbjQ_1"/>
    <property type="match status" value="1"/>
</dbReference>
<dbReference type="SUPFAM" id="SSF117782">
    <property type="entry name" value="YbjQ-like"/>
    <property type="match status" value="1"/>
</dbReference>